<organism>
    <name type="scientific">Saccharomyces cerevisiae (strain ATCC 204508 / S288c)</name>
    <name type="common">Baker's yeast</name>
    <dbReference type="NCBI Taxonomy" id="559292"/>
    <lineage>
        <taxon>Eukaryota</taxon>
        <taxon>Fungi</taxon>
        <taxon>Dikarya</taxon>
        <taxon>Ascomycota</taxon>
        <taxon>Saccharomycotina</taxon>
        <taxon>Saccharomycetes</taxon>
        <taxon>Saccharomycetales</taxon>
        <taxon>Saccharomycetaceae</taxon>
        <taxon>Saccharomyces</taxon>
    </lineage>
</organism>
<name>SPT23_YEAST</name>
<gene>
    <name type="primary">SPT23</name>
    <name type="ordered locus">YKL020C</name>
</gene>
<dbReference type="EMBL" id="Z28020">
    <property type="protein sequence ID" value="CAA81855.1"/>
    <property type="molecule type" value="Genomic_DNA"/>
</dbReference>
<dbReference type="EMBL" id="L24760">
    <property type="protein sequence ID" value="AAA20575.1"/>
    <property type="status" value="ALT_FRAME"/>
    <property type="molecule type" value="Genomic_DNA"/>
</dbReference>
<dbReference type="EMBL" id="BK006944">
    <property type="protein sequence ID" value="DAA09135.1"/>
    <property type="molecule type" value="Genomic_DNA"/>
</dbReference>
<dbReference type="PIR" id="S37837">
    <property type="entry name" value="S37837"/>
</dbReference>
<dbReference type="RefSeq" id="NP_012905.1">
    <property type="nucleotide sequence ID" value="NM_001179586.1"/>
</dbReference>
<dbReference type="SMR" id="P35210"/>
<dbReference type="BioGRID" id="34111">
    <property type="interactions" value="147"/>
</dbReference>
<dbReference type="DIP" id="DIP-1307N"/>
<dbReference type="ELM" id="P35210"/>
<dbReference type="FunCoup" id="P35210">
    <property type="interactions" value="1730"/>
</dbReference>
<dbReference type="IntAct" id="P35210">
    <property type="interactions" value="6"/>
</dbReference>
<dbReference type="MINT" id="P35210"/>
<dbReference type="STRING" id="4932.YKL020C"/>
<dbReference type="iPTMnet" id="P35210"/>
<dbReference type="PaxDb" id="4932-YKL020C"/>
<dbReference type="PeptideAtlas" id="P35210"/>
<dbReference type="EnsemblFungi" id="YKL020C_mRNA">
    <property type="protein sequence ID" value="YKL020C"/>
    <property type="gene ID" value="YKL020C"/>
</dbReference>
<dbReference type="GeneID" id="853848"/>
<dbReference type="KEGG" id="sce:YKL020C"/>
<dbReference type="AGR" id="SGD:S000001503"/>
<dbReference type="SGD" id="S000001503">
    <property type="gene designation" value="SPT23"/>
</dbReference>
<dbReference type="VEuPathDB" id="FungiDB:YKL020C"/>
<dbReference type="eggNOG" id="KOG3836">
    <property type="taxonomic scope" value="Eukaryota"/>
</dbReference>
<dbReference type="GeneTree" id="ENSGT00940000156179"/>
<dbReference type="HOGENOM" id="CLU_004311_0_0_1"/>
<dbReference type="InParanoid" id="P35210"/>
<dbReference type="OMA" id="IPNWQLC"/>
<dbReference type="OrthoDB" id="71307at2759"/>
<dbReference type="BioCyc" id="YEAST:G3O-31828-MONOMER"/>
<dbReference type="BioGRID-ORCS" id="853848">
    <property type="hits" value="2 hits in 10 CRISPR screens"/>
</dbReference>
<dbReference type="PRO" id="PR:P35210"/>
<dbReference type="Proteomes" id="UP000002311">
    <property type="component" value="Chromosome XI"/>
</dbReference>
<dbReference type="RNAct" id="P35210">
    <property type="molecule type" value="protein"/>
</dbReference>
<dbReference type="GO" id="GO:0005783">
    <property type="term" value="C:endoplasmic reticulum"/>
    <property type="evidence" value="ECO:0007005"/>
    <property type="project" value="SGD"/>
</dbReference>
<dbReference type="GO" id="GO:0005789">
    <property type="term" value="C:endoplasmic reticulum membrane"/>
    <property type="evidence" value="ECO:0000314"/>
    <property type="project" value="SGD"/>
</dbReference>
<dbReference type="GO" id="GO:0005634">
    <property type="term" value="C:nucleus"/>
    <property type="evidence" value="ECO:0000314"/>
    <property type="project" value="SGD"/>
</dbReference>
<dbReference type="GO" id="GO:0070417">
    <property type="term" value="P:cellular response to cold"/>
    <property type="evidence" value="ECO:0000316"/>
    <property type="project" value="SGD"/>
</dbReference>
<dbReference type="GO" id="GO:0045944">
    <property type="term" value="P:positive regulation of transcription by RNA polymerase II"/>
    <property type="evidence" value="ECO:0000315"/>
    <property type="project" value="SGD"/>
</dbReference>
<dbReference type="GO" id="GO:2001280">
    <property type="term" value="P:positive regulation of unsaturated fatty acid biosynthetic process"/>
    <property type="evidence" value="ECO:0000316"/>
    <property type="project" value="SGD"/>
</dbReference>
<dbReference type="GO" id="GO:0030466">
    <property type="term" value="P:silent mating-type cassette heterochromatin formation"/>
    <property type="evidence" value="ECO:0000316"/>
    <property type="project" value="SGD"/>
</dbReference>
<dbReference type="CDD" id="cd00102">
    <property type="entry name" value="IPT"/>
    <property type="match status" value="1"/>
</dbReference>
<dbReference type="FunFam" id="2.60.40.10:FF:001880">
    <property type="entry name" value="Mga2p"/>
    <property type="match status" value="1"/>
</dbReference>
<dbReference type="Gene3D" id="1.25.40.20">
    <property type="entry name" value="Ankyrin repeat-containing domain"/>
    <property type="match status" value="1"/>
</dbReference>
<dbReference type="Gene3D" id="2.60.40.10">
    <property type="entry name" value="Immunoglobulins"/>
    <property type="match status" value="1"/>
</dbReference>
<dbReference type="InterPro" id="IPR002110">
    <property type="entry name" value="Ankyrin_rpt"/>
</dbReference>
<dbReference type="InterPro" id="IPR036770">
    <property type="entry name" value="Ankyrin_rpt-contain_sf"/>
</dbReference>
<dbReference type="InterPro" id="IPR013783">
    <property type="entry name" value="Ig-like_fold"/>
</dbReference>
<dbReference type="InterPro" id="IPR014756">
    <property type="entry name" value="Ig_E-set"/>
</dbReference>
<dbReference type="InterPro" id="IPR002909">
    <property type="entry name" value="IPT_dom"/>
</dbReference>
<dbReference type="PANTHER" id="PTHR24124">
    <property type="entry name" value="ANKYRIN REPEAT FAMILY A"/>
    <property type="match status" value="1"/>
</dbReference>
<dbReference type="PANTHER" id="PTHR24124:SF8">
    <property type="entry name" value="OCA DOMAIN-CONTAINING PROTEIN"/>
    <property type="match status" value="1"/>
</dbReference>
<dbReference type="Pfam" id="PF12796">
    <property type="entry name" value="Ank_2"/>
    <property type="match status" value="1"/>
</dbReference>
<dbReference type="Pfam" id="PF01833">
    <property type="entry name" value="TIG"/>
    <property type="match status" value="1"/>
</dbReference>
<dbReference type="SMART" id="SM00248">
    <property type="entry name" value="ANK"/>
    <property type="match status" value="2"/>
</dbReference>
<dbReference type="SMART" id="SM00429">
    <property type="entry name" value="IPT"/>
    <property type="match status" value="1"/>
</dbReference>
<dbReference type="SUPFAM" id="SSF48403">
    <property type="entry name" value="Ankyrin repeat"/>
    <property type="match status" value="1"/>
</dbReference>
<dbReference type="SUPFAM" id="SSF81296">
    <property type="entry name" value="E set domains"/>
    <property type="match status" value="1"/>
</dbReference>
<dbReference type="PROSITE" id="PS50297">
    <property type="entry name" value="ANK_REP_REGION"/>
    <property type="match status" value="1"/>
</dbReference>
<dbReference type="PROSITE" id="PS50088">
    <property type="entry name" value="ANK_REPEAT"/>
    <property type="match status" value="2"/>
</dbReference>
<proteinExistence type="evidence at protein level"/>
<feature type="chain" id="PRO_0000067076" description="Protein SPT23">
    <location>
        <begin position="1"/>
        <end position="1082"/>
    </location>
</feature>
<feature type="domain" description="IPT/TIG">
    <location>
        <begin position="508"/>
        <end position="585"/>
    </location>
</feature>
<feature type="repeat" description="ANK 1">
    <location>
        <begin position="709"/>
        <end position="738"/>
    </location>
</feature>
<feature type="repeat" description="ANK 2">
    <location>
        <begin position="742"/>
        <end position="771"/>
    </location>
</feature>
<feature type="region of interest" description="Disordered" evidence="1">
    <location>
        <begin position="315"/>
        <end position="346"/>
    </location>
</feature>
<feature type="region of interest" description="Disordered" evidence="1">
    <location>
        <begin position="376"/>
        <end position="417"/>
    </location>
</feature>
<feature type="region of interest" description="Disordered" evidence="1">
    <location>
        <begin position="457"/>
        <end position="476"/>
    </location>
</feature>
<feature type="compositionally biased region" description="Low complexity" evidence="1">
    <location>
        <begin position="316"/>
        <end position="328"/>
    </location>
</feature>
<feature type="compositionally biased region" description="Polar residues" evidence="1">
    <location>
        <begin position="329"/>
        <end position="346"/>
    </location>
</feature>
<feature type="compositionally biased region" description="Low complexity" evidence="1">
    <location>
        <begin position="376"/>
        <end position="391"/>
    </location>
</feature>
<feature type="compositionally biased region" description="Low complexity" evidence="1">
    <location>
        <begin position="399"/>
        <end position="416"/>
    </location>
</feature>
<feature type="modified residue" description="Phosphoserine" evidence="4">
    <location>
        <position position="468"/>
    </location>
</feature>
<feature type="sequence conflict" description="In Ref. 3; AAA20575." evidence="3" ref="3">
    <original>H</original>
    <variation>P</variation>
    <location>
        <position position="715"/>
    </location>
</feature>
<reference key="1">
    <citation type="journal article" date="1994" name="Nature">
        <title>Complete DNA sequence of yeast chromosome XI.</title>
        <authorList>
            <person name="Dujon B."/>
            <person name="Alexandraki D."/>
            <person name="Andre B."/>
            <person name="Ansorge W."/>
            <person name="Baladron V."/>
            <person name="Ballesta J.P.G."/>
            <person name="Banrevi A."/>
            <person name="Bolle P.-A."/>
            <person name="Bolotin-Fukuhara M."/>
            <person name="Bossier P."/>
            <person name="Bou G."/>
            <person name="Boyer J."/>
            <person name="Buitrago M.J."/>
            <person name="Cheret G."/>
            <person name="Colleaux L."/>
            <person name="Daignan-Fornier B."/>
            <person name="del Rey F."/>
            <person name="Dion C."/>
            <person name="Domdey H."/>
            <person name="Duesterhoeft A."/>
            <person name="Duesterhus S."/>
            <person name="Entian K.-D."/>
            <person name="Erfle H."/>
            <person name="Esteban P.F."/>
            <person name="Feldmann H."/>
            <person name="Fernandes L."/>
            <person name="Fobo G.M."/>
            <person name="Fritz C."/>
            <person name="Fukuhara H."/>
            <person name="Gabel C."/>
            <person name="Gaillon L."/>
            <person name="Garcia-Cantalejo J.M."/>
            <person name="Garcia-Ramirez J.J."/>
            <person name="Gent M.E."/>
            <person name="Ghazvini M."/>
            <person name="Goffeau A."/>
            <person name="Gonzalez A."/>
            <person name="Grothues D."/>
            <person name="Guerreiro P."/>
            <person name="Hegemann J.H."/>
            <person name="Hewitt N."/>
            <person name="Hilger F."/>
            <person name="Hollenberg C.P."/>
            <person name="Horaitis O."/>
            <person name="Indge K.J."/>
            <person name="Jacquier A."/>
            <person name="James C.M."/>
            <person name="Jauniaux J.-C."/>
            <person name="Jimenez A."/>
            <person name="Keuchel H."/>
            <person name="Kirchrath L."/>
            <person name="Kleine K."/>
            <person name="Koetter P."/>
            <person name="Legrain P."/>
            <person name="Liebl S."/>
            <person name="Louis E.J."/>
            <person name="Maia e Silva A."/>
            <person name="Marck C."/>
            <person name="Monnier A.-L."/>
            <person name="Moestl D."/>
            <person name="Mueller S."/>
            <person name="Obermaier B."/>
            <person name="Oliver S.G."/>
            <person name="Pallier C."/>
            <person name="Pascolo S."/>
            <person name="Pfeiffer F."/>
            <person name="Philippsen P."/>
            <person name="Planta R.J."/>
            <person name="Pohl F.M."/>
            <person name="Pohl T.M."/>
            <person name="Poehlmann R."/>
            <person name="Portetelle D."/>
            <person name="Purnelle B."/>
            <person name="Puzos V."/>
            <person name="Ramezani Rad M."/>
            <person name="Rasmussen S.W."/>
            <person name="Remacha M.A."/>
            <person name="Revuelta J.L."/>
            <person name="Richard G.-F."/>
            <person name="Rieger M."/>
            <person name="Rodrigues-Pousada C."/>
            <person name="Rose M."/>
            <person name="Rupp T."/>
            <person name="Santos M.A."/>
            <person name="Schwager C."/>
            <person name="Sensen C."/>
            <person name="Skala J."/>
            <person name="Soares H."/>
            <person name="Sor F."/>
            <person name="Stegemann J."/>
            <person name="Tettelin H."/>
            <person name="Thierry A."/>
            <person name="Tzermia M."/>
            <person name="Urrestarazu L.A."/>
            <person name="van Dyck L."/>
            <person name="van Vliet-Reedijk J.C."/>
            <person name="Valens M."/>
            <person name="Vandenbol M."/>
            <person name="Vilela C."/>
            <person name="Vissers S."/>
            <person name="von Wettstein D."/>
            <person name="Voss H."/>
            <person name="Wiemann S."/>
            <person name="Xu G."/>
            <person name="Zimmermann J."/>
            <person name="Haasemann M."/>
            <person name="Becker I."/>
            <person name="Mewes H.-W."/>
        </authorList>
    </citation>
    <scope>NUCLEOTIDE SEQUENCE [LARGE SCALE GENOMIC DNA]</scope>
    <source>
        <strain>ATCC 204508 / S288c</strain>
    </source>
</reference>
<reference key="2">
    <citation type="journal article" date="2014" name="G3 (Bethesda)">
        <title>The reference genome sequence of Saccharomyces cerevisiae: Then and now.</title>
        <authorList>
            <person name="Engel S.R."/>
            <person name="Dietrich F.S."/>
            <person name="Fisk D.G."/>
            <person name="Binkley G."/>
            <person name="Balakrishnan R."/>
            <person name="Costanzo M.C."/>
            <person name="Dwight S.S."/>
            <person name="Hitz B.C."/>
            <person name="Karra K."/>
            <person name="Nash R.S."/>
            <person name="Weng S."/>
            <person name="Wong E.D."/>
            <person name="Lloyd P."/>
            <person name="Skrzypek M.S."/>
            <person name="Miyasato S.R."/>
            <person name="Simison M."/>
            <person name="Cherry J.M."/>
        </authorList>
    </citation>
    <scope>GENOME REANNOTATION</scope>
    <source>
        <strain>ATCC 204508 / S288c</strain>
    </source>
</reference>
<reference key="3">
    <citation type="journal article" date="1994" name="Yeast">
        <title>Molecular characterization of the SPT23 gene: a dosage-dependent suppressor of Ty-induced promoter mutations from Saccharomyces cerevisiae.</title>
        <authorList>
            <person name="Burkett T.J."/>
            <person name="Garfinkel D.J."/>
        </authorList>
    </citation>
    <scope>NUCLEOTIDE SEQUENCE [GENOMIC DNA] OF 136-752</scope>
</reference>
<reference key="4">
    <citation type="journal article" date="2003" name="Nature">
        <title>Global analysis of protein expression in yeast.</title>
        <authorList>
            <person name="Ghaemmaghami S."/>
            <person name="Huh W.-K."/>
            <person name="Bower K."/>
            <person name="Howson R.W."/>
            <person name="Belle A."/>
            <person name="Dephoure N."/>
            <person name="O'Shea E.K."/>
            <person name="Weissman J.S."/>
        </authorList>
    </citation>
    <scope>LEVEL OF PROTEIN EXPRESSION [LARGE SCALE ANALYSIS]</scope>
</reference>
<reference key="5">
    <citation type="journal article" date="2009" name="Science">
        <title>Global analysis of Cdk1 substrate phosphorylation sites provides insights into evolution.</title>
        <authorList>
            <person name="Holt L.J."/>
            <person name="Tuch B.B."/>
            <person name="Villen J."/>
            <person name="Johnson A.D."/>
            <person name="Gygi S.P."/>
            <person name="Morgan D.O."/>
        </authorList>
    </citation>
    <scope>PHOSPHORYLATION [LARGE SCALE ANALYSIS] AT SER-468</scope>
    <scope>IDENTIFICATION BY MASS SPECTROMETRY [LARGE SCALE ANALYSIS]</scope>
</reference>
<evidence type="ECO:0000256" key="1">
    <source>
        <dbReference type="SAM" id="MobiDB-lite"/>
    </source>
</evidence>
<evidence type="ECO:0000269" key="2">
    <source>
    </source>
</evidence>
<evidence type="ECO:0000305" key="3"/>
<evidence type="ECO:0007744" key="4">
    <source>
    </source>
</evidence>
<sequence length="1082" mass="121338">MMSGTGNVSSMLHSYSANIQHNDGSPDLDLLESELLDIALLNSGSSLQDPGLLSLNQEKMITAGTTTPGKEDEGELRDDIASLQGLLDRHVQFGRKLPLRTPYANPLDFININPQSLPLSLEIIGLPKVSRVETQMKLSFRIRNAHARKNFFIHLPSDCIAKDKFFTSSDDPTNLTIPNRDINERTLFLDAFLLCASNNNSNNFKQTYVCNRCINREKRRASRRKSGLNDNSIWQNNENKRAIIFNSKQLFIISNNGLSGNSNCINFDLPTRIVCYCRHHKATNGFVVLFLLRDHNGDILAKTITDPIMIMDKKNASNTTTPTSTSNAQVSPMTNDTRSFSSPQSDLNFPSEFPLPSNSKNFVISTNCMLDSNCNNNNNDNDNKNNIKTNTAMMNNNRHFPSPNSSSEDSNHSFSDIHFSNNNDNNLHRSLDSWSSTGFNSSSNPALTTLTSDFSAASARHTGKRQRSVNEPFMSTPNTFSRLPQKFIDSSKDISNHNSVPVALNNKPSIQRVIPAQGSINGGIEVTLLGSKFKQGLIIKFGENIALSSQCWNESTMVTYLPPSSKPGPVLVTIVDPSETSMRNNSNSSVSTSNSTNDILHLNKYTGEKAIFTYVDDTDRQLIELALQIVGLKMNGKLEDARNIAKRIVGSDSSPSNNNAGLHSQNSSLNSYTNMMRNINDEQLITEVIKSFKRNNNLSTVNLSMCDVRGRTLLHLAAFNNWYSLVSLLIKYGSHLNDQDLFGFTPLHMACINGDLRIIRLLLECNVNIMKKTRNGFIAKQFFLMNYTVNKTRYSNYETSLFDDILTRLTKNTTGSSDTQPFERNVSQSSFNSSLFDDDDADHDYVQERKYLLADSAALAPEQSNCNDNTSFSILDSDSGYDISDCESSSDEIALEFFNTHKIKDFSSKPNEIPKTTKTSIEPDGSLWNRMLTRLNDELPKYEDLFPKKPKNWELGSKSVEIGPDNSAQMTVDDSQTSSEDDELEALQVGFNTIFSKKQNFQNDKMLLFFWIPLTLVLLLCFTLSNLGKDDDMFHNLSKIVQEYLRIGLAKVLLGNERMKTSFKMQLSKFQNNNILNDMRVN</sequence>
<comment type="function">
    <text>Dosage-dependent suppressor of Ty-induced promoter mutations. May exert its suppression effect through protein-protein interactions since does not present any of the motifs generally found in transcriptional activators or DNA binding proteins.</text>
</comment>
<comment type="miscellaneous">
    <text evidence="2">Present with 432 molecules/cell in log phase SD medium.</text>
</comment>
<comment type="sequence caution" evidence="3">
    <conflict type="frameshift">
        <sequence resource="EMBL-CDS" id="AAA20575"/>
    </conflict>
</comment>
<protein>
    <recommendedName>
        <fullName>Protein SPT23</fullName>
    </recommendedName>
</protein>
<keyword id="KW-0040">ANK repeat</keyword>
<keyword id="KW-0597">Phosphoprotein</keyword>
<keyword id="KW-1185">Reference proteome</keyword>
<keyword id="KW-0677">Repeat</keyword>
<accession>P35210</accession>
<accession>D6VXR5</accession>